<proteinExistence type="inferred from homology"/>
<sequence>MKVSIFITCVADVFYPEVGKDVVEILEDLGCEVDFPKTQTCCGQPAYNSGYVKETKTAAKHMIEAFASSEYVVAPSGSCAMMVHEFSSLFSESEADWKKKATELGNKTYEFTQFLVEVLGKEDLGAELHKKATVHTSCHMSRLMGIKEPPQKLLKCVKGLEVVSLPHNYDCCGFGGTFSVKMPEISEQMVEEKVKHIMETGAELLIGMDCSCLMNIKGRLTRNGYPIDVKHIAQVLNEDRKQGGI</sequence>
<reference key="1">
    <citation type="journal article" date="2008" name="Chem. Biol. Interact.">
        <title>Extending the Bacillus cereus group genomics to putative food-borne pathogens of different toxicity.</title>
        <authorList>
            <person name="Lapidus A."/>
            <person name="Goltsman E."/>
            <person name="Auger S."/>
            <person name="Galleron N."/>
            <person name="Segurens B."/>
            <person name="Dossat C."/>
            <person name="Land M.L."/>
            <person name="Broussolle V."/>
            <person name="Brillard J."/>
            <person name="Guinebretiere M.-H."/>
            <person name="Sanchis V."/>
            <person name="Nguen-the C."/>
            <person name="Lereclus D."/>
            <person name="Richardson P."/>
            <person name="Wincker P."/>
            <person name="Weissenbach J."/>
            <person name="Ehrlich S.D."/>
            <person name="Sorokin A."/>
        </authorList>
    </citation>
    <scope>NUCLEOTIDE SEQUENCE [LARGE SCALE GENOMIC DNA]</scope>
    <source>
        <strain>KBAB4</strain>
    </source>
</reference>
<accession>A9VI76</accession>
<evidence type="ECO:0000255" key="1">
    <source>
        <dbReference type="HAMAP-Rule" id="MF_02105"/>
    </source>
</evidence>
<protein>
    <recommendedName>
        <fullName evidence="1">Lactate utilization protein A 1</fullName>
    </recommendedName>
</protein>
<organism>
    <name type="scientific">Bacillus mycoides (strain KBAB4)</name>
    <name type="common">Bacillus weihenstephanensis</name>
    <dbReference type="NCBI Taxonomy" id="315730"/>
    <lineage>
        <taxon>Bacteria</taxon>
        <taxon>Bacillati</taxon>
        <taxon>Bacillota</taxon>
        <taxon>Bacilli</taxon>
        <taxon>Bacillales</taxon>
        <taxon>Bacillaceae</taxon>
        <taxon>Bacillus</taxon>
        <taxon>Bacillus cereus group</taxon>
    </lineage>
</organism>
<feature type="chain" id="PRO_0000384044" description="Lactate utilization protein A 1">
    <location>
        <begin position="1"/>
        <end position="245"/>
    </location>
</feature>
<comment type="function">
    <text evidence="1">Is involved in L-lactate degradation and allows cells to grow with lactate as the sole carbon source.</text>
</comment>
<comment type="similarity">
    <text evidence="1">Belongs to the LutA/YkgE family.</text>
</comment>
<name>LUTA1_BACMK</name>
<dbReference type="EMBL" id="CP000903">
    <property type="protein sequence ID" value="ABY42219.1"/>
    <property type="molecule type" value="Genomic_DNA"/>
</dbReference>
<dbReference type="RefSeq" id="WP_002166203.1">
    <property type="nucleotide sequence ID" value="NC_010184.1"/>
</dbReference>
<dbReference type="SMR" id="A9VI76"/>
<dbReference type="KEGG" id="bwe:BcerKBAB4_0967"/>
<dbReference type="eggNOG" id="COG0247">
    <property type="taxonomic scope" value="Bacteria"/>
</dbReference>
<dbReference type="HOGENOM" id="CLU_023081_1_0_9"/>
<dbReference type="Proteomes" id="UP000002154">
    <property type="component" value="Chromosome"/>
</dbReference>
<dbReference type="GO" id="GO:0005829">
    <property type="term" value="C:cytosol"/>
    <property type="evidence" value="ECO:0007669"/>
    <property type="project" value="TreeGrafter"/>
</dbReference>
<dbReference type="GO" id="GO:0016491">
    <property type="term" value="F:oxidoreductase activity"/>
    <property type="evidence" value="ECO:0007669"/>
    <property type="project" value="UniProtKB-ARBA"/>
</dbReference>
<dbReference type="GO" id="GO:0006089">
    <property type="term" value="P:lactate metabolic process"/>
    <property type="evidence" value="ECO:0007669"/>
    <property type="project" value="UniProtKB-UniRule"/>
</dbReference>
<dbReference type="HAMAP" id="MF_02105">
    <property type="entry name" value="LutA"/>
    <property type="match status" value="1"/>
</dbReference>
<dbReference type="InterPro" id="IPR004017">
    <property type="entry name" value="Cys_rich_dom"/>
</dbReference>
<dbReference type="InterPro" id="IPR022822">
    <property type="entry name" value="LutA"/>
</dbReference>
<dbReference type="PANTHER" id="PTHR30296:SF0">
    <property type="entry name" value="LACTATE UTILIZATION PROTEIN A"/>
    <property type="match status" value="1"/>
</dbReference>
<dbReference type="PANTHER" id="PTHR30296">
    <property type="entry name" value="UNCHARACTERIZED PROTEIN YKGE"/>
    <property type="match status" value="1"/>
</dbReference>
<dbReference type="Pfam" id="PF02754">
    <property type="entry name" value="CCG"/>
    <property type="match status" value="2"/>
</dbReference>
<gene>
    <name evidence="1" type="primary">lutA1</name>
    <name type="ordered locus">BcerKBAB4_0967</name>
</gene>